<reference key="1">
    <citation type="journal article" date="2001" name="Curr. Biol.">
        <title>The molecular basis of nuclear genetic code change in ciliates.</title>
        <authorList>
            <person name="Lozupone C.A."/>
            <person name="Knight R.D."/>
            <person name="Landweber L.F."/>
        </authorList>
    </citation>
    <scope>NUCLEOTIDE SEQUENCE [MRNA]</scope>
    <source>
        <strain>CCAP 1607/1</strain>
    </source>
</reference>
<protein>
    <recommendedName>
        <fullName>Eukaryotic peptide chain release factor subunit 1</fullName>
        <shortName>Eukaryotic release factor 1</shortName>
        <shortName>eRF1</shortName>
    </recommendedName>
</protein>
<sequence>MEGDELTQNIEQWKIKRLIDNLDKARGNGTSLISLIIPPREQLPIINKMITEEYGKSSNIKSRIVRQAVQSALTSTKERLKLYNNRLPANGLILYCGEVINEEGVCEKKYTIDFQPYRAINTTLYICDNKFHTQPLKDLLVMDDKFGFIIIDGNGTLFGTLQGNTKEVLHKFSVDLPKKHRRGGQSALRFARLRMESRNNYLRKVAEQAVVQFISSDKVNVAGLIIAGSAEFKNVLVQSDLFDQRLAAKVLKIVDVAYGGENGFTQAIELSADTLSNIKFIREKKVMSKFFEEVAQDTKKYCYGVEDTMKSLLMGAVEVILLFENLNFTRYVLKNPTTGIEKTLYLTPEQEENHDNFIENGEELEALEKGPLPEWIVDNYMKFGAGLEFITDRSQEGAQFVRGFGGLGAFLRYQVDMAHLNAGEEELDEEWDDDFM</sequence>
<accession>Q9BMM3</accession>
<feature type="chain" id="PRO_0000143146" description="Eukaryotic peptide chain release factor subunit 1">
    <location>
        <begin position="1"/>
        <end position="436"/>
    </location>
</feature>
<keyword id="KW-0963">Cytoplasm</keyword>
<keyword id="KW-0648">Protein biosynthesis</keyword>
<organism>
    <name type="scientific">Blepharisma americanum</name>
    <name type="common">Ciliate</name>
    <dbReference type="NCBI Taxonomy" id="5960"/>
    <lineage>
        <taxon>Eukaryota</taxon>
        <taxon>Sar</taxon>
        <taxon>Alveolata</taxon>
        <taxon>Ciliophora</taxon>
        <taxon>Postciliodesmatophora</taxon>
        <taxon>Heterotrichea</taxon>
        <taxon>Heterotrichida</taxon>
        <taxon>Blepharismidae</taxon>
        <taxon>Blepharisma</taxon>
    </lineage>
</organism>
<proteinExistence type="evidence at transcript level"/>
<dbReference type="EMBL" id="AF317831">
    <property type="protein sequence ID" value="AAK12089.1"/>
    <property type="molecule type" value="mRNA"/>
</dbReference>
<dbReference type="SMR" id="Q9BMM3"/>
<dbReference type="GO" id="GO:0005737">
    <property type="term" value="C:cytoplasm"/>
    <property type="evidence" value="ECO:0007669"/>
    <property type="project" value="UniProtKB-SubCell"/>
</dbReference>
<dbReference type="GO" id="GO:0003747">
    <property type="term" value="F:translation release factor activity"/>
    <property type="evidence" value="ECO:0007669"/>
    <property type="project" value="InterPro"/>
</dbReference>
<dbReference type="FunFam" id="3.30.1330.30:FF:000006">
    <property type="entry name" value="Peptide chain release factor subunit 1"/>
    <property type="match status" value="1"/>
</dbReference>
<dbReference type="FunFam" id="3.30.420.60:FF:000003">
    <property type="entry name" value="Peptide chain release factor subunit 1"/>
    <property type="match status" value="1"/>
</dbReference>
<dbReference type="Gene3D" id="3.30.1330.30">
    <property type="match status" value="1"/>
</dbReference>
<dbReference type="Gene3D" id="3.30.960.10">
    <property type="entry name" value="eRF1 domain 1"/>
    <property type="match status" value="1"/>
</dbReference>
<dbReference type="Gene3D" id="3.30.420.60">
    <property type="entry name" value="eRF1 domain 2"/>
    <property type="match status" value="1"/>
</dbReference>
<dbReference type="InterPro" id="IPR042226">
    <property type="entry name" value="eFR1_2_sf"/>
</dbReference>
<dbReference type="InterPro" id="IPR005140">
    <property type="entry name" value="eRF1_1_Pelota"/>
</dbReference>
<dbReference type="InterPro" id="IPR024049">
    <property type="entry name" value="eRF1_1_sf"/>
</dbReference>
<dbReference type="InterPro" id="IPR005141">
    <property type="entry name" value="eRF1_2"/>
</dbReference>
<dbReference type="InterPro" id="IPR005142">
    <property type="entry name" value="eRF1_3"/>
</dbReference>
<dbReference type="InterPro" id="IPR004403">
    <property type="entry name" value="Peptide_chain-rel_eRF1/aRF1"/>
</dbReference>
<dbReference type="InterPro" id="IPR029064">
    <property type="entry name" value="Ribosomal_eL30-like_sf"/>
</dbReference>
<dbReference type="NCBIfam" id="TIGR03676">
    <property type="entry name" value="aRF1_eRF1"/>
    <property type="match status" value="1"/>
</dbReference>
<dbReference type="PANTHER" id="PTHR10113">
    <property type="entry name" value="PEPTIDE CHAIN RELEASE FACTOR SUBUNIT 1"/>
    <property type="match status" value="1"/>
</dbReference>
<dbReference type="Pfam" id="PF03463">
    <property type="entry name" value="eRF1_1"/>
    <property type="match status" value="1"/>
</dbReference>
<dbReference type="Pfam" id="PF03464">
    <property type="entry name" value="eRF1_2"/>
    <property type="match status" value="1"/>
</dbReference>
<dbReference type="Pfam" id="PF03465">
    <property type="entry name" value="eRF1_3"/>
    <property type="match status" value="1"/>
</dbReference>
<dbReference type="SMART" id="SM01194">
    <property type="entry name" value="eRF1_1"/>
    <property type="match status" value="1"/>
</dbReference>
<dbReference type="SUPFAM" id="SSF55315">
    <property type="entry name" value="L30e-like"/>
    <property type="match status" value="1"/>
</dbReference>
<dbReference type="SUPFAM" id="SSF55481">
    <property type="entry name" value="N-terminal domain of eukaryotic peptide chain release factor subunit 1, ERF1"/>
    <property type="match status" value="1"/>
</dbReference>
<dbReference type="SUPFAM" id="SSF53137">
    <property type="entry name" value="Translational machinery components"/>
    <property type="match status" value="1"/>
</dbReference>
<comment type="function">
    <text>Directs the termination of nascent peptide synthesis (translation) in response to the termination codons UAA and UAG. In B.americanum UGA codes for tryptophan.</text>
</comment>
<comment type="subunit">
    <text>Heterodimer of two subunits, one of which binds GTP.</text>
</comment>
<comment type="subcellular location">
    <subcellularLocation>
        <location>Cytoplasm</location>
    </subcellularLocation>
</comment>
<comment type="similarity">
    <text evidence="1">Belongs to the eukaryotic release factor 1 family.</text>
</comment>
<gene>
    <name type="primary">eRF1</name>
</gene>
<evidence type="ECO:0000305" key="1"/>
<name>ERF1_BLEAM</name>